<comment type="function">
    <text evidence="1">One of the primary rRNA binding proteins, it binds directly to 16S rRNA central domain where it helps coordinate assembly of the platform of the 30S subunit.</text>
</comment>
<comment type="subunit">
    <text evidence="1">Part of the 30S ribosomal subunit.</text>
</comment>
<comment type="subcellular location">
    <subcellularLocation>
        <location>Plastid</location>
        <location>Chloroplast</location>
    </subcellularLocation>
</comment>
<comment type="similarity">
    <text evidence="2">Belongs to the universal ribosomal protein uS8 family.</text>
</comment>
<proteinExistence type="inferred from homology"/>
<keyword id="KW-0150">Chloroplast</keyword>
<keyword id="KW-0934">Plastid</keyword>
<keyword id="KW-0687">Ribonucleoprotein</keyword>
<keyword id="KW-0689">Ribosomal protein</keyword>
<keyword id="KW-0694">RNA-binding</keyword>
<keyword id="KW-0699">rRNA-binding</keyword>
<protein>
    <recommendedName>
        <fullName evidence="2">Small ribosomal subunit protein uS8c</fullName>
    </recommendedName>
    <alternativeName>
        <fullName>30S ribosomal protein S8, chloroplastic</fullName>
    </alternativeName>
</protein>
<organism>
    <name type="scientific">Spirogyra maxima</name>
    <name type="common">Green alga</name>
    <dbReference type="NCBI Taxonomy" id="3180"/>
    <lineage>
        <taxon>Eukaryota</taxon>
        <taxon>Viridiplantae</taxon>
        <taxon>Streptophyta</taxon>
        <taxon>Zygnematophyceae</taxon>
        <taxon>Zygnematophycidae</taxon>
        <taxon>Zygnematales</taxon>
        <taxon>Zygnemataceae</taxon>
        <taxon>Spirogyra</taxon>
    </lineage>
</organism>
<feature type="chain" id="PRO_0000126595" description="Small ribosomal subunit protein uS8c">
    <location>
        <begin position="1"/>
        <end position="132"/>
    </location>
</feature>
<dbReference type="EMBL" id="AF050665">
    <property type="protein sequence ID" value="AAC95314.1"/>
    <property type="molecule type" value="Genomic_DNA"/>
</dbReference>
<dbReference type="RefSeq" id="YP_009258382.1">
    <property type="nucleotide sequence ID" value="NC_030355.1"/>
</dbReference>
<dbReference type="SMR" id="O98458"/>
<dbReference type="GeneID" id="27984691"/>
<dbReference type="GO" id="GO:0009507">
    <property type="term" value="C:chloroplast"/>
    <property type="evidence" value="ECO:0007669"/>
    <property type="project" value="UniProtKB-SubCell"/>
</dbReference>
<dbReference type="GO" id="GO:1990904">
    <property type="term" value="C:ribonucleoprotein complex"/>
    <property type="evidence" value="ECO:0007669"/>
    <property type="project" value="UniProtKB-KW"/>
</dbReference>
<dbReference type="GO" id="GO:0005840">
    <property type="term" value="C:ribosome"/>
    <property type="evidence" value="ECO:0007669"/>
    <property type="project" value="UniProtKB-KW"/>
</dbReference>
<dbReference type="GO" id="GO:0019843">
    <property type="term" value="F:rRNA binding"/>
    <property type="evidence" value="ECO:0007669"/>
    <property type="project" value="UniProtKB-UniRule"/>
</dbReference>
<dbReference type="GO" id="GO:0003735">
    <property type="term" value="F:structural constituent of ribosome"/>
    <property type="evidence" value="ECO:0007669"/>
    <property type="project" value="InterPro"/>
</dbReference>
<dbReference type="GO" id="GO:0006412">
    <property type="term" value="P:translation"/>
    <property type="evidence" value="ECO:0007669"/>
    <property type="project" value="UniProtKB-UniRule"/>
</dbReference>
<dbReference type="FunFam" id="3.30.1490.10:FF:000001">
    <property type="entry name" value="30S ribosomal protein S8"/>
    <property type="match status" value="1"/>
</dbReference>
<dbReference type="Gene3D" id="3.30.1370.30">
    <property type="match status" value="1"/>
</dbReference>
<dbReference type="Gene3D" id="3.30.1490.10">
    <property type="match status" value="1"/>
</dbReference>
<dbReference type="HAMAP" id="MF_01302_B">
    <property type="entry name" value="Ribosomal_uS8_B"/>
    <property type="match status" value="1"/>
</dbReference>
<dbReference type="InterPro" id="IPR000630">
    <property type="entry name" value="Ribosomal_uS8"/>
</dbReference>
<dbReference type="InterPro" id="IPR047863">
    <property type="entry name" value="Ribosomal_uS8_CS"/>
</dbReference>
<dbReference type="InterPro" id="IPR035987">
    <property type="entry name" value="Ribosomal_uS8_sf"/>
</dbReference>
<dbReference type="NCBIfam" id="NF001109">
    <property type="entry name" value="PRK00136.1"/>
    <property type="match status" value="1"/>
</dbReference>
<dbReference type="PANTHER" id="PTHR11758">
    <property type="entry name" value="40S RIBOSOMAL PROTEIN S15A"/>
    <property type="match status" value="1"/>
</dbReference>
<dbReference type="Pfam" id="PF00410">
    <property type="entry name" value="Ribosomal_S8"/>
    <property type="match status" value="1"/>
</dbReference>
<dbReference type="SUPFAM" id="SSF56047">
    <property type="entry name" value="Ribosomal protein S8"/>
    <property type="match status" value="1"/>
</dbReference>
<dbReference type="PROSITE" id="PS00053">
    <property type="entry name" value="RIBOSOMAL_S8"/>
    <property type="match status" value="1"/>
</dbReference>
<accession>O98458</accession>
<name>RR8_SPIMX</name>
<sequence length="132" mass="14815">MSNDIISNMITSIRNAILSKTKTVDILATTTTRSIAKILLQEGFIDGLRERQENGRRLLLLTLHYERKNKSKITTSLRRISKPGLRVYSNHQEIPKVLGGIGIVILSTSKGIMVDREARHKKIGGEIICYVS</sequence>
<gene>
    <name type="primary">rps8</name>
</gene>
<geneLocation type="chloroplast"/>
<reference key="1">
    <citation type="submission" date="1998-02" db="EMBL/GenBank/DDBJ databases">
        <title>Chloroplast rpl23 gene cluster of Spirogyra maxima (Charophyceae), shared by land plants.</title>
        <authorList>
            <person name="Lee J."/>
            <person name="Manhart J.R."/>
        </authorList>
    </citation>
    <scope>NUCLEOTIDE SEQUENCE [GENOMIC DNA]</scope>
    <source>
        <strain>UTEX LB 2495</strain>
    </source>
</reference>
<evidence type="ECO:0000250" key="1"/>
<evidence type="ECO:0000305" key="2"/>